<gene>
    <name evidence="1" type="primary">gpt</name>
    <name type="ordered locus">Z0299</name>
    <name type="ordered locus">ECs0265</name>
</gene>
<dbReference type="EC" id="2.4.2.-" evidence="1"/>
<dbReference type="EC" id="2.4.2.22" evidence="1"/>
<dbReference type="EMBL" id="AE005174">
    <property type="protein sequence ID" value="AAG54563.1"/>
    <property type="molecule type" value="Genomic_DNA"/>
</dbReference>
<dbReference type="EMBL" id="BA000007">
    <property type="protein sequence ID" value="BAB33688.1"/>
    <property type="molecule type" value="Genomic_DNA"/>
</dbReference>
<dbReference type="PIR" id="A90662">
    <property type="entry name" value="A90662"/>
</dbReference>
<dbReference type="PIR" id="G85512">
    <property type="entry name" value="G85512"/>
</dbReference>
<dbReference type="RefSeq" id="NP_308292.1">
    <property type="nucleotide sequence ID" value="NC_002695.1"/>
</dbReference>
<dbReference type="RefSeq" id="WP_001291990.1">
    <property type="nucleotide sequence ID" value="NZ_VOAI01000020.1"/>
</dbReference>
<dbReference type="SMR" id="P0A9M6"/>
<dbReference type="STRING" id="155864.Z0299"/>
<dbReference type="GeneID" id="914363"/>
<dbReference type="GeneID" id="93777155"/>
<dbReference type="KEGG" id="ece:Z0299"/>
<dbReference type="KEGG" id="ecs:ECs_0265"/>
<dbReference type="PATRIC" id="fig|386585.9.peg.367"/>
<dbReference type="eggNOG" id="COG2236">
    <property type="taxonomic scope" value="Bacteria"/>
</dbReference>
<dbReference type="HOGENOM" id="CLU_080904_3_0_6"/>
<dbReference type="OMA" id="FHRDCRA"/>
<dbReference type="UniPathway" id="UPA00602">
    <property type="reaction ID" value="UER00658"/>
</dbReference>
<dbReference type="UniPathway" id="UPA00909">
    <property type="reaction ID" value="UER00887"/>
</dbReference>
<dbReference type="Proteomes" id="UP000000558">
    <property type="component" value="Chromosome"/>
</dbReference>
<dbReference type="Proteomes" id="UP000002519">
    <property type="component" value="Chromosome"/>
</dbReference>
<dbReference type="GO" id="GO:0005829">
    <property type="term" value="C:cytosol"/>
    <property type="evidence" value="ECO:0007669"/>
    <property type="project" value="TreeGrafter"/>
</dbReference>
<dbReference type="GO" id="GO:0005886">
    <property type="term" value="C:plasma membrane"/>
    <property type="evidence" value="ECO:0007669"/>
    <property type="project" value="UniProtKB-SubCell"/>
</dbReference>
<dbReference type="GO" id="GO:0052657">
    <property type="term" value="F:guanine phosphoribosyltransferase activity"/>
    <property type="evidence" value="ECO:0007669"/>
    <property type="project" value="RHEA"/>
</dbReference>
<dbReference type="GO" id="GO:0004422">
    <property type="term" value="F:hypoxanthine phosphoribosyltransferase activity"/>
    <property type="evidence" value="ECO:0007669"/>
    <property type="project" value="TreeGrafter"/>
</dbReference>
<dbReference type="GO" id="GO:0000287">
    <property type="term" value="F:magnesium ion binding"/>
    <property type="evidence" value="ECO:0007669"/>
    <property type="project" value="UniProtKB-UniRule"/>
</dbReference>
<dbReference type="GO" id="GO:0000310">
    <property type="term" value="F:xanthine phosphoribosyltransferase activity"/>
    <property type="evidence" value="ECO:0007669"/>
    <property type="project" value="UniProtKB-UniRule"/>
</dbReference>
<dbReference type="GO" id="GO:0032263">
    <property type="term" value="P:GMP salvage"/>
    <property type="evidence" value="ECO:0007669"/>
    <property type="project" value="UniProtKB-UniRule"/>
</dbReference>
<dbReference type="GO" id="GO:0032264">
    <property type="term" value="P:IMP salvage"/>
    <property type="evidence" value="ECO:0007669"/>
    <property type="project" value="TreeGrafter"/>
</dbReference>
<dbReference type="GO" id="GO:0006166">
    <property type="term" value="P:purine ribonucleoside salvage"/>
    <property type="evidence" value="ECO:0007669"/>
    <property type="project" value="UniProtKB-KW"/>
</dbReference>
<dbReference type="GO" id="GO:0032265">
    <property type="term" value="P:XMP salvage"/>
    <property type="evidence" value="ECO:0007669"/>
    <property type="project" value="UniProtKB-UniRule"/>
</dbReference>
<dbReference type="CDD" id="cd06223">
    <property type="entry name" value="PRTases_typeI"/>
    <property type="match status" value="1"/>
</dbReference>
<dbReference type="FunFam" id="3.40.50.2020:FF:000009">
    <property type="entry name" value="Xanthine phosphoribosyltransferase"/>
    <property type="match status" value="1"/>
</dbReference>
<dbReference type="Gene3D" id="3.40.50.2020">
    <property type="match status" value="1"/>
</dbReference>
<dbReference type="HAMAP" id="MF_01903">
    <property type="entry name" value="XGPRT"/>
    <property type="match status" value="1"/>
</dbReference>
<dbReference type="InterPro" id="IPR000836">
    <property type="entry name" value="PRibTrfase_dom"/>
</dbReference>
<dbReference type="InterPro" id="IPR029057">
    <property type="entry name" value="PRTase-like"/>
</dbReference>
<dbReference type="InterPro" id="IPR023747">
    <property type="entry name" value="Xanthine_Guanine_PRibTrfase"/>
</dbReference>
<dbReference type="NCBIfam" id="NF006613">
    <property type="entry name" value="PRK09177.1"/>
    <property type="match status" value="1"/>
</dbReference>
<dbReference type="PANTHER" id="PTHR39563">
    <property type="entry name" value="XANTHINE PHOSPHORIBOSYLTRANSFERASE"/>
    <property type="match status" value="1"/>
</dbReference>
<dbReference type="PANTHER" id="PTHR39563:SF1">
    <property type="entry name" value="XANTHINE-GUANINE PHOSPHORIBOSYLTRANSFERASE"/>
    <property type="match status" value="1"/>
</dbReference>
<dbReference type="Pfam" id="PF00156">
    <property type="entry name" value="Pribosyltran"/>
    <property type="match status" value="1"/>
</dbReference>
<dbReference type="SUPFAM" id="SSF53271">
    <property type="entry name" value="PRTase-like"/>
    <property type="match status" value="1"/>
</dbReference>
<dbReference type="PROSITE" id="PS00103">
    <property type="entry name" value="PUR_PYR_PR_TRANSFER"/>
    <property type="match status" value="1"/>
</dbReference>
<comment type="function">
    <text evidence="1">Purine salvage pathway enzyme that catalyzes the transfer of the ribosyl-5-phosphate group from 5-phospho-alpha-D-ribose 1-diphosphate (PRPP) to the N9 position of the 6-oxopurines guanine and xanthine to form the corresponding ribonucleotides GMP (guanosine 5'-monophosphate) and XMP (xanthosine 5'-monophosphate), with the release of PPi. To a lesser extent, also acts on hypoxanthine.</text>
</comment>
<comment type="catalytic activity">
    <reaction evidence="1">
        <text>GMP + diphosphate = guanine + 5-phospho-alpha-D-ribose 1-diphosphate</text>
        <dbReference type="Rhea" id="RHEA:25424"/>
        <dbReference type="ChEBI" id="CHEBI:16235"/>
        <dbReference type="ChEBI" id="CHEBI:33019"/>
        <dbReference type="ChEBI" id="CHEBI:58017"/>
        <dbReference type="ChEBI" id="CHEBI:58115"/>
    </reaction>
    <physiologicalReaction direction="right-to-left" evidence="1">
        <dbReference type="Rhea" id="RHEA:25426"/>
    </physiologicalReaction>
</comment>
<comment type="catalytic activity">
    <reaction evidence="1">
        <text>XMP + diphosphate = xanthine + 5-phospho-alpha-D-ribose 1-diphosphate</text>
        <dbReference type="Rhea" id="RHEA:10800"/>
        <dbReference type="ChEBI" id="CHEBI:17712"/>
        <dbReference type="ChEBI" id="CHEBI:33019"/>
        <dbReference type="ChEBI" id="CHEBI:57464"/>
        <dbReference type="ChEBI" id="CHEBI:58017"/>
        <dbReference type="EC" id="2.4.2.22"/>
    </reaction>
    <physiologicalReaction direction="right-to-left" evidence="1">
        <dbReference type="Rhea" id="RHEA:10802"/>
    </physiologicalReaction>
</comment>
<comment type="catalytic activity">
    <reaction evidence="1">
        <text>IMP + diphosphate = hypoxanthine + 5-phospho-alpha-D-ribose 1-diphosphate</text>
        <dbReference type="Rhea" id="RHEA:17973"/>
        <dbReference type="ChEBI" id="CHEBI:17368"/>
        <dbReference type="ChEBI" id="CHEBI:33019"/>
        <dbReference type="ChEBI" id="CHEBI:58017"/>
        <dbReference type="ChEBI" id="CHEBI:58053"/>
    </reaction>
    <physiologicalReaction direction="right-to-left" evidence="1">
        <dbReference type="Rhea" id="RHEA:17975"/>
    </physiologicalReaction>
</comment>
<comment type="cofactor">
    <cofactor evidence="1">
        <name>Mg(2+)</name>
        <dbReference type="ChEBI" id="CHEBI:18420"/>
    </cofactor>
</comment>
<comment type="pathway">
    <text evidence="1">Purine metabolism; GMP biosynthesis via salvage pathway; GMP from guanine: step 1/1.</text>
</comment>
<comment type="pathway">
    <text evidence="1">Purine metabolism; XMP biosynthesis via salvage pathway; XMP from xanthine: step 1/1.</text>
</comment>
<comment type="subunit">
    <text evidence="1">Homotetramer.</text>
</comment>
<comment type="subcellular location">
    <subcellularLocation>
        <location evidence="1">Cell inner membrane</location>
        <topology evidence="1">Peripheral membrane protein</topology>
    </subcellularLocation>
</comment>
<comment type="similarity">
    <text evidence="1">Belongs to the purine/pyrimidine phosphoribosyltransferase family. XGPT subfamily.</text>
</comment>
<protein>
    <recommendedName>
        <fullName evidence="1">Xanthine-guanine phosphoribosyltransferase</fullName>
        <shortName evidence="1">XGPRT</shortName>
        <ecNumber evidence="1">2.4.2.-</ecNumber>
        <ecNumber evidence="1">2.4.2.22</ecNumber>
    </recommendedName>
    <alternativeName>
        <fullName evidence="1">Xanthine phosphoribosyltransferase</fullName>
    </alternativeName>
</protein>
<reference key="1">
    <citation type="journal article" date="2001" name="Nature">
        <title>Genome sequence of enterohaemorrhagic Escherichia coli O157:H7.</title>
        <authorList>
            <person name="Perna N.T."/>
            <person name="Plunkett G. III"/>
            <person name="Burland V."/>
            <person name="Mau B."/>
            <person name="Glasner J.D."/>
            <person name="Rose D.J."/>
            <person name="Mayhew G.F."/>
            <person name="Evans P.S."/>
            <person name="Gregor J."/>
            <person name="Kirkpatrick H.A."/>
            <person name="Posfai G."/>
            <person name="Hackett J."/>
            <person name="Klink S."/>
            <person name="Boutin A."/>
            <person name="Shao Y."/>
            <person name="Miller L."/>
            <person name="Grotbeck E.J."/>
            <person name="Davis N.W."/>
            <person name="Lim A."/>
            <person name="Dimalanta E.T."/>
            <person name="Potamousis K."/>
            <person name="Apodaca J."/>
            <person name="Anantharaman T.S."/>
            <person name="Lin J."/>
            <person name="Yen G."/>
            <person name="Schwartz D.C."/>
            <person name="Welch R.A."/>
            <person name="Blattner F.R."/>
        </authorList>
    </citation>
    <scope>NUCLEOTIDE SEQUENCE [LARGE SCALE GENOMIC DNA]</scope>
    <source>
        <strain>O157:H7 / EDL933 / ATCC 700927 / EHEC</strain>
    </source>
</reference>
<reference key="2">
    <citation type="journal article" date="2001" name="DNA Res.">
        <title>Complete genome sequence of enterohemorrhagic Escherichia coli O157:H7 and genomic comparison with a laboratory strain K-12.</title>
        <authorList>
            <person name="Hayashi T."/>
            <person name="Makino K."/>
            <person name="Ohnishi M."/>
            <person name="Kurokawa K."/>
            <person name="Ishii K."/>
            <person name="Yokoyama K."/>
            <person name="Han C.-G."/>
            <person name="Ohtsubo E."/>
            <person name="Nakayama K."/>
            <person name="Murata T."/>
            <person name="Tanaka M."/>
            <person name="Tobe T."/>
            <person name="Iida T."/>
            <person name="Takami H."/>
            <person name="Honda T."/>
            <person name="Sasakawa C."/>
            <person name="Ogasawara N."/>
            <person name="Yasunaga T."/>
            <person name="Kuhara S."/>
            <person name="Shiba T."/>
            <person name="Hattori M."/>
            <person name="Shinagawa H."/>
        </authorList>
    </citation>
    <scope>NUCLEOTIDE SEQUENCE [LARGE SCALE GENOMIC DNA]</scope>
    <source>
        <strain>O157:H7 / Sakai / RIMD 0509952 / EHEC</strain>
    </source>
</reference>
<name>XGPT_ECO57</name>
<organism>
    <name type="scientific">Escherichia coli O157:H7</name>
    <dbReference type="NCBI Taxonomy" id="83334"/>
    <lineage>
        <taxon>Bacteria</taxon>
        <taxon>Pseudomonadati</taxon>
        <taxon>Pseudomonadota</taxon>
        <taxon>Gammaproteobacteria</taxon>
        <taxon>Enterobacterales</taxon>
        <taxon>Enterobacteriaceae</taxon>
        <taxon>Escherichia</taxon>
    </lineage>
</organism>
<accession>P0A9M6</accession>
<accession>P00501</accession>
<sequence length="152" mass="16971">MSEKYIVTWDMLQIHARKLASRLMPSEQWKGIIAVSRGGLVPGALLARELGIRHVDTVCISSYDHDNQRELKVLKRAEGDGEGFIVIDDLVDTGGTAVAIREMYPKAHFVTIFAKPAGRPLVDDYVVDIPQDTWIEQPWDMGVVFVPPISGR</sequence>
<feature type="chain" id="PRO_0000139667" description="Xanthine-guanine phosphoribosyltransferase">
    <location>
        <begin position="1"/>
        <end position="152"/>
    </location>
</feature>
<feature type="binding site" evidence="1">
    <location>
        <begin position="37"/>
        <end position="38"/>
    </location>
    <ligand>
        <name>5-phospho-alpha-D-ribose 1-diphosphate</name>
        <dbReference type="ChEBI" id="CHEBI:58017"/>
    </ligand>
</feature>
<feature type="binding site" evidence="1">
    <location>
        <position position="69"/>
    </location>
    <ligand>
        <name>5-phospho-alpha-D-ribose 1-diphosphate</name>
        <dbReference type="ChEBI" id="CHEBI:58017"/>
    </ligand>
</feature>
<feature type="binding site" evidence="1">
    <location>
        <position position="69"/>
    </location>
    <ligand>
        <name>GMP</name>
        <dbReference type="ChEBI" id="CHEBI:58115"/>
    </ligand>
</feature>
<feature type="binding site" evidence="1">
    <location>
        <begin position="88"/>
        <end position="96"/>
    </location>
    <ligand>
        <name>5-phospho-alpha-D-ribose 1-diphosphate</name>
        <dbReference type="ChEBI" id="CHEBI:58017"/>
    </ligand>
</feature>
<feature type="binding site" evidence="1">
    <location>
        <position position="89"/>
    </location>
    <ligand>
        <name>Mg(2+)</name>
        <dbReference type="ChEBI" id="CHEBI:18420"/>
    </ligand>
</feature>
<feature type="binding site" evidence="1">
    <location>
        <begin position="92"/>
        <end position="96"/>
    </location>
    <ligand>
        <name>GMP</name>
        <dbReference type="ChEBI" id="CHEBI:58115"/>
    </ligand>
</feature>
<feature type="binding site" evidence="1">
    <location>
        <position position="92"/>
    </location>
    <ligand>
        <name>guanine</name>
        <dbReference type="ChEBI" id="CHEBI:16235"/>
    </ligand>
</feature>
<feature type="binding site" evidence="1">
    <location>
        <position position="92"/>
    </location>
    <ligand>
        <name>xanthine</name>
        <dbReference type="ChEBI" id="CHEBI:17712"/>
    </ligand>
</feature>
<feature type="binding site" evidence="1">
    <location>
        <begin position="134"/>
        <end position="135"/>
    </location>
    <ligand>
        <name>GMP</name>
        <dbReference type="ChEBI" id="CHEBI:58115"/>
    </ligand>
</feature>
<feature type="binding site" evidence="1">
    <location>
        <position position="135"/>
    </location>
    <ligand>
        <name>guanine</name>
        <dbReference type="ChEBI" id="CHEBI:16235"/>
    </ligand>
</feature>
<feature type="binding site" evidence="1">
    <location>
        <position position="135"/>
    </location>
    <ligand>
        <name>xanthine</name>
        <dbReference type="ChEBI" id="CHEBI:17712"/>
    </ligand>
</feature>
<keyword id="KW-0997">Cell inner membrane</keyword>
<keyword id="KW-1003">Cell membrane</keyword>
<keyword id="KW-0328">Glycosyltransferase</keyword>
<keyword id="KW-0460">Magnesium</keyword>
<keyword id="KW-0472">Membrane</keyword>
<keyword id="KW-0479">Metal-binding</keyword>
<keyword id="KW-0660">Purine salvage</keyword>
<keyword id="KW-1185">Reference proteome</keyword>
<keyword id="KW-0808">Transferase</keyword>
<proteinExistence type="inferred from homology"/>
<evidence type="ECO:0000255" key="1">
    <source>
        <dbReference type="HAMAP-Rule" id="MF_01903"/>
    </source>
</evidence>